<keyword id="KW-0001">2Fe-2S</keyword>
<keyword id="KW-0004">4Fe-4S</keyword>
<keyword id="KW-0093">Biotin biosynthesis</keyword>
<keyword id="KW-0408">Iron</keyword>
<keyword id="KW-0411">Iron-sulfur</keyword>
<keyword id="KW-0479">Metal-binding</keyword>
<keyword id="KW-1185">Reference proteome</keyword>
<keyword id="KW-0949">S-adenosyl-L-methionine</keyword>
<keyword id="KW-0808">Transferase</keyword>
<feature type="chain" id="PRO_0000381356" description="Biotin synthase">
    <location>
        <begin position="1"/>
        <end position="346"/>
    </location>
</feature>
<feature type="domain" description="Radical SAM core" evidence="2">
    <location>
        <begin position="38"/>
        <end position="256"/>
    </location>
</feature>
<feature type="binding site" evidence="1">
    <location>
        <position position="53"/>
    </location>
    <ligand>
        <name>[4Fe-4S] cluster</name>
        <dbReference type="ChEBI" id="CHEBI:49883"/>
        <note>4Fe-4S-S-AdoMet</note>
    </ligand>
</feature>
<feature type="binding site" evidence="1">
    <location>
        <position position="57"/>
    </location>
    <ligand>
        <name>[4Fe-4S] cluster</name>
        <dbReference type="ChEBI" id="CHEBI:49883"/>
        <note>4Fe-4S-S-AdoMet</note>
    </ligand>
</feature>
<feature type="binding site" evidence="1">
    <location>
        <position position="60"/>
    </location>
    <ligand>
        <name>[4Fe-4S] cluster</name>
        <dbReference type="ChEBI" id="CHEBI:49883"/>
        <note>4Fe-4S-S-AdoMet</note>
    </ligand>
</feature>
<feature type="binding site" evidence="1">
    <location>
        <position position="97"/>
    </location>
    <ligand>
        <name>[2Fe-2S] cluster</name>
        <dbReference type="ChEBI" id="CHEBI:190135"/>
    </ligand>
</feature>
<feature type="binding site" evidence="1">
    <location>
        <position position="128"/>
    </location>
    <ligand>
        <name>[2Fe-2S] cluster</name>
        <dbReference type="ChEBI" id="CHEBI:190135"/>
    </ligand>
</feature>
<feature type="binding site" evidence="1">
    <location>
        <position position="188"/>
    </location>
    <ligand>
        <name>[2Fe-2S] cluster</name>
        <dbReference type="ChEBI" id="CHEBI:190135"/>
    </ligand>
</feature>
<feature type="binding site" evidence="1">
    <location>
        <position position="260"/>
    </location>
    <ligand>
        <name>[2Fe-2S] cluster</name>
        <dbReference type="ChEBI" id="CHEBI:190135"/>
    </ligand>
</feature>
<dbReference type="EC" id="2.8.1.6" evidence="1"/>
<dbReference type="EMBL" id="FM180568">
    <property type="protein sequence ID" value="CAS08275.1"/>
    <property type="molecule type" value="Genomic_DNA"/>
</dbReference>
<dbReference type="RefSeq" id="WP_000951213.1">
    <property type="nucleotide sequence ID" value="NC_011601.1"/>
</dbReference>
<dbReference type="SMR" id="B7ULX2"/>
<dbReference type="GeneID" id="93776655"/>
<dbReference type="KEGG" id="ecg:E2348C_0727"/>
<dbReference type="HOGENOM" id="CLU_033172_1_2_6"/>
<dbReference type="UniPathway" id="UPA00078">
    <property type="reaction ID" value="UER00162"/>
</dbReference>
<dbReference type="Proteomes" id="UP000008205">
    <property type="component" value="Chromosome"/>
</dbReference>
<dbReference type="GO" id="GO:0051537">
    <property type="term" value="F:2 iron, 2 sulfur cluster binding"/>
    <property type="evidence" value="ECO:0007669"/>
    <property type="project" value="UniProtKB-KW"/>
</dbReference>
<dbReference type="GO" id="GO:0051539">
    <property type="term" value="F:4 iron, 4 sulfur cluster binding"/>
    <property type="evidence" value="ECO:0007669"/>
    <property type="project" value="UniProtKB-KW"/>
</dbReference>
<dbReference type="GO" id="GO:0004076">
    <property type="term" value="F:biotin synthase activity"/>
    <property type="evidence" value="ECO:0007669"/>
    <property type="project" value="UniProtKB-UniRule"/>
</dbReference>
<dbReference type="GO" id="GO:0005506">
    <property type="term" value="F:iron ion binding"/>
    <property type="evidence" value="ECO:0007669"/>
    <property type="project" value="UniProtKB-UniRule"/>
</dbReference>
<dbReference type="GO" id="GO:0009102">
    <property type="term" value="P:biotin biosynthetic process"/>
    <property type="evidence" value="ECO:0007669"/>
    <property type="project" value="UniProtKB-UniRule"/>
</dbReference>
<dbReference type="CDD" id="cd01335">
    <property type="entry name" value="Radical_SAM"/>
    <property type="match status" value="1"/>
</dbReference>
<dbReference type="FunFam" id="3.20.20.70:FF:000011">
    <property type="entry name" value="Biotin synthase"/>
    <property type="match status" value="1"/>
</dbReference>
<dbReference type="Gene3D" id="3.20.20.70">
    <property type="entry name" value="Aldolase class I"/>
    <property type="match status" value="1"/>
</dbReference>
<dbReference type="HAMAP" id="MF_01694">
    <property type="entry name" value="BioB"/>
    <property type="match status" value="1"/>
</dbReference>
<dbReference type="InterPro" id="IPR013785">
    <property type="entry name" value="Aldolase_TIM"/>
</dbReference>
<dbReference type="InterPro" id="IPR010722">
    <property type="entry name" value="BATS_dom"/>
</dbReference>
<dbReference type="InterPro" id="IPR002684">
    <property type="entry name" value="Biotin_synth/BioAB"/>
</dbReference>
<dbReference type="InterPro" id="IPR024177">
    <property type="entry name" value="Biotin_synthase"/>
</dbReference>
<dbReference type="InterPro" id="IPR006638">
    <property type="entry name" value="Elp3/MiaA/NifB-like_rSAM"/>
</dbReference>
<dbReference type="InterPro" id="IPR007197">
    <property type="entry name" value="rSAM"/>
</dbReference>
<dbReference type="NCBIfam" id="TIGR00433">
    <property type="entry name" value="bioB"/>
    <property type="match status" value="1"/>
</dbReference>
<dbReference type="PANTHER" id="PTHR22976">
    <property type="entry name" value="BIOTIN SYNTHASE"/>
    <property type="match status" value="1"/>
</dbReference>
<dbReference type="PANTHER" id="PTHR22976:SF2">
    <property type="entry name" value="BIOTIN SYNTHASE, MITOCHONDRIAL"/>
    <property type="match status" value="1"/>
</dbReference>
<dbReference type="Pfam" id="PF06968">
    <property type="entry name" value="BATS"/>
    <property type="match status" value="1"/>
</dbReference>
<dbReference type="Pfam" id="PF04055">
    <property type="entry name" value="Radical_SAM"/>
    <property type="match status" value="1"/>
</dbReference>
<dbReference type="PIRSF" id="PIRSF001619">
    <property type="entry name" value="Biotin_synth"/>
    <property type="match status" value="1"/>
</dbReference>
<dbReference type="SFLD" id="SFLDG01060">
    <property type="entry name" value="BATS_domain_containing"/>
    <property type="match status" value="1"/>
</dbReference>
<dbReference type="SFLD" id="SFLDF00272">
    <property type="entry name" value="biotin_synthase"/>
    <property type="match status" value="1"/>
</dbReference>
<dbReference type="SMART" id="SM00876">
    <property type="entry name" value="BATS"/>
    <property type="match status" value="1"/>
</dbReference>
<dbReference type="SMART" id="SM00729">
    <property type="entry name" value="Elp3"/>
    <property type="match status" value="1"/>
</dbReference>
<dbReference type="SUPFAM" id="SSF102114">
    <property type="entry name" value="Radical SAM enzymes"/>
    <property type="match status" value="1"/>
</dbReference>
<dbReference type="PROSITE" id="PS51918">
    <property type="entry name" value="RADICAL_SAM"/>
    <property type="match status" value="1"/>
</dbReference>
<sequence>MAHRPRWTLSQVTELFEKPLLDLLFEAQQVHRQHFDPRQVQVSTLLSIKTGACPEDCKYCPQSSRYKTGLEAERLMEVEQVLESARKAKAAGSTRFCMGAAWKNPHERDMPYLEQMVQGVKAMGLEACMTLGTLSESQAQRLANAGLDYYNHNLDTSPEFYGNIITTRTYQERLDTLEKVRDAGIKVCSGGIVGLGETVKDRAGLLLQLANLPTPPESVPINMLVKVKGTPLADNDDVDAFDFIRTIAVARIMMPTSYVRLSAGREQMNEQTQAMCFMAGANSIFYGCKLLTTPNPEEDKDLQLFRKLGLNPQQTAVLAGDNEQQQRLEQALMTPDTDEYYNAAAL</sequence>
<evidence type="ECO:0000255" key="1">
    <source>
        <dbReference type="HAMAP-Rule" id="MF_01694"/>
    </source>
</evidence>
<evidence type="ECO:0000255" key="2">
    <source>
        <dbReference type="PROSITE-ProRule" id="PRU01266"/>
    </source>
</evidence>
<gene>
    <name evidence="1" type="primary">bioB</name>
    <name type="ordered locus">E2348C_0727</name>
</gene>
<reference key="1">
    <citation type="journal article" date="2009" name="J. Bacteriol.">
        <title>Complete genome sequence and comparative genome analysis of enteropathogenic Escherichia coli O127:H6 strain E2348/69.</title>
        <authorList>
            <person name="Iguchi A."/>
            <person name="Thomson N.R."/>
            <person name="Ogura Y."/>
            <person name="Saunders D."/>
            <person name="Ooka T."/>
            <person name="Henderson I.R."/>
            <person name="Harris D."/>
            <person name="Asadulghani M."/>
            <person name="Kurokawa K."/>
            <person name="Dean P."/>
            <person name="Kenny B."/>
            <person name="Quail M.A."/>
            <person name="Thurston S."/>
            <person name="Dougan G."/>
            <person name="Hayashi T."/>
            <person name="Parkhill J."/>
            <person name="Frankel G."/>
        </authorList>
    </citation>
    <scope>NUCLEOTIDE SEQUENCE [LARGE SCALE GENOMIC DNA]</scope>
    <source>
        <strain>E2348/69 / EPEC</strain>
    </source>
</reference>
<name>BIOB_ECO27</name>
<accession>B7ULX2</accession>
<organism>
    <name type="scientific">Escherichia coli O127:H6 (strain E2348/69 / EPEC)</name>
    <dbReference type="NCBI Taxonomy" id="574521"/>
    <lineage>
        <taxon>Bacteria</taxon>
        <taxon>Pseudomonadati</taxon>
        <taxon>Pseudomonadota</taxon>
        <taxon>Gammaproteobacteria</taxon>
        <taxon>Enterobacterales</taxon>
        <taxon>Enterobacteriaceae</taxon>
        <taxon>Escherichia</taxon>
    </lineage>
</organism>
<protein>
    <recommendedName>
        <fullName evidence="1">Biotin synthase</fullName>
        <ecNumber evidence="1">2.8.1.6</ecNumber>
    </recommendedName>
</protein>
<proteinExistence type="inferred from homology"/>
<comment type="function">
    <text evidence="1">Catalyzes the conversion of dethiobiotin (DTB) to biotin by the insertion of a sulfur atom into dethiobiotin via a radical-based mechanism.</text>
</comment>
<comment type="catalytic activity">
    <reaction evidence="1">
        <text>(4R,5S)-dethiobiotin + (sulfur carrier)-SH + 2 reduced [2Fe-2S]-[ferredoxin] + 2 S-adenosyl-L-methionine = (sulfur carrier)-H + biotin + 2 5'-deoxyadenosine + 2 L-methionine + 2 oxidized [2Fe-2S]-[ferredoxin]</text>
        <dbReference type="Rhea" id="RHEA:22060"/>
        <dbReference type="Rhea" id="RHEA-COMP:10000"/>
        <dbReference type="Rhea" id="RHEA-COMP:10001"/>
        <dbReference type="Rhea" id="RHEA-COMP:14737"/>
        <dbReference type="Rhea" id="RHEA-COMP:14739"/>
        <dbReference type="ChEBI" id="CHEBI:17319"/>
        <dbReference type="ChEBI" id="CHEBI:29917"/>
        <dbReference type="ChEBI" id="CHEBI:33737"/>
        <dbReference type="ChEBI" id="CHEBI:33738"/>
        <dbReference type="ChEBI" id="CHEBI:57586"/>
        <dbReference type="ChEBI" id="CHEBI:57844"/>
        <dbReference type="ChEBI" id="CHEBI:59789"/>
        <dbReference type="ChEBI" id="CHEBI:64428"/>
        <dbReference type="ChEBI" id="CHEBI:149473"/>
        <dbReference type="EC" id="2.8.1.6"/>
    </reaction>
</comment>
<comment type="cofactor">
    <cofactor evidence="1">
        <name>[4Fe-4S] cluster</name>
        <dbReference type="ChEBI" id="CHEBI:49883"/>
    </cofactor>
    <text evidence="1">Binds 1 [4Fe-4S] cluster. The cluster is coordinated with 3 cysteines and an exchangeable S-adenosyl-L-methionine.</text>
</comment>
<comment type="cofactor">
    <cofactor evidence="1">
        <name>[2Fe-2S] cluster</name>
        <dbReference type="ChEBI" id="CHEBI:190135"/>
    </cofactor>
    <text evidence="1">Binds 1 [2Fe-2S] cluster. The cluster is coordinated with 3 cysteines and 1 arginine.</text>
</comment>
<comment type="pathway">
    <text evidence="1">Cofactor biosynthesis; biotin biosynthesis; biotin from 7,8-diaminononanoate: step 2/2.</text>
</comment>
<comment type="subunit">
    <text evidence="1">Homodimer.</text>
</comment>
<comment type="similarity">
    <text evidence="1">Belongs to the radical SAM superfamily. Biotin synthase family.</text>
</comment>